<protein>
    <recommendedName>
        <fullName evidence="1">Protein RecA</fullName>
    </recommendedName>
    <alternativeName>
        <fullName evidence="1">Recombinase A</fullName>
    </alternativeName>
</protein>
<reference key="1">
    <citation type="journal article" date="1998" name="FEMS Microbiol. Lett.">
        <title>The phylogenetic relationships of Chlorobium tepidum and Chloroflexus aurantiacus based upon their RecA sequences.</title>
        <authorList>
            <person name="Gruber T.M."/>
            <person name="Eisen J.A."/>
            <person name="Gish K."/>
            <person name="Bryant D.A."/>
        </authorList>
    </citation>
    <scope>NUCLEOTIDE SEQUENCE [GENOMIC DNA]</scope>
</reference>
<reference key="2">
    <citation type="journal article" date="2002" name="Proc. Natl. Acad. Sci. U.S.A.">
        <title>The complete genome sequence of Chlorobium tepidum TLS, a photosynthetic, anaerobic, green-sulfur bacterium.</title>
        <authorList>
            <person name="Eisen J.A."/>
            <person name="Nelson K.E."/>
            <person name="Paulsen I.T."/>
            <person name="Heidelberg J.F."/>
            <person name="Wu M."/>
            <person name="Dodson R.J."/>
            <person name="DeBoy R.T."/>
            <person name="Gwinn M.L."/>
            <person name="Nelson W.C."/>
            <person name="Haft D.H."/>
            <person name="Hickey E.K."/>
            <person name="Peterson J.D."/>
            <person name="Durkin A.S."/>
            <person name="Kolonay J.F."/>
            <person name="Yang F."/>
            <person name="Holt I.E."/>
            <person name="Umayam L.A."/>
            <person name="Mason T.M."/>
            <person name="Brenner M."/>
            <person name="Shea T.P."/>
            <person name="Parksey D.S."/>
            <person name="Nierman W.C."/>
            <person name="Feldblyum T.V."/>
            <person name="Hansen C.L."/>
            <person name="Craven M.B."/>
            <person name="Radune D."/>
            <person name="Vamathevan J.J."/>
            <person name="Khouri H.M."/>
            <person name="White O."/>
            <person name="Gruber T.M."/>
            <person name="Ketchum K.A."/>
            <person name="Venter J.C."/>
            <person name="Tettelin H."/>
            <person name="Bryant D.A."/>
            <person name="Fraser C.M."/>
        </authorList>
    </citation>
    <scope>NUCLEOTIDE SEQUENCE [LARGE SCALE GENOMIC DNA]</scope>
    <source>
        <strain>ATCC 49652 / DSM 12025 / NBRC 103806 / TLS</strain>
    </source>
</reference>
<sequence>MEKEATPQQQPPVVDPARLKQLNLAIETLEKQFGKGAIMRLGDDSAVMHVQVISTGSMALDYALGVGGLPRGRVTEIYGPESSGKTTLALHAIAEAQKNGGIAALVDAEHAFDPTYARKLGVDINALLVSQPESGEQALSIVETLVRSGAVDIIVIDSVAALVPQAELEGEMGDSVVGLQARLMSQALRKLTGAISKSSSVCLFINQLRDKIGVMYGSPETTTGGKALKFYSSVRLDIRKIAQIKDGEELVGNRTKVKVVKNKVAPPFKTAEFDILYGEGISVLGELIDLAVEFGIIKKSGAWFSYGTEKLGQGRENVKKLLKEDETLRNTIRQQVRDMLTGAPTA</sequence>
<organism>
    <name type="scientific">Chlorobaculum tepidum (strain ATCC 49652 / DSM 12025 / NBRC 103806 / TLS)</name>
    <name type="common">Chlorobium tepidum</name>
    <dbReference type="NCBI Taxonomy" id="194439"/>
    <lineage>
        <taxon>Bacteria</taxon>
        <taxon>Pseudomonadati</taxon>
        <taxon>Chlorobiota</taxon>
        <taxon>Chlorobiia</taxon>
        <taxon>Chlorobiales</taxon>
        <taxon>Chlorobiaceae</taxon>
        <taxon>Chlorobaculum</taxon>
    </lineage>
</organism>
<feature type="chain" id="PRO_0000122686" description="Protein RecA">
    <location>
        <begin position="1"/>
        <end position="346"/>
    </location>
</feature>
<feature type="binding site" evidence="1">
    <location>
        <begin position="79"/>
        <end position="86"/>
    </location>
    <ligand>
        <name>ATP</name>
        <dbReference type="ChEBI" id="CHEBI:30616"/>
    </ligand>
</feature>
<comment type="function">
    <text evidence="1">Can catalyze the hydrolysis of ATP in the presence of single-stranded DNA, the ATP-dependent uptake of single-stranded DNA by duplex DNA, and the ATP-dependent hybridization of homologous single-stranded DNAs. It interacts with LexA causing its activation and leading to its autocatalytic cleavage.</text>
</comment>
<comment type="subcellular location">
    <subcellularLocation>
        <location evidence="1">Cytoplasm</location>
    </subcellularLocation>
</comment>
<comment type="similarity">
    <text evidence="1">Belongs to the RecA family.</text>
</comment>
<accession>O52393</accession>
<evidence type="ECO:0000255" key="1">
    <source>
        <dbReference type="HAMAP-Rule" id="MF_00268"/>
    </source>
</evidence>
<keyword id="KW-0067">ATP-binding</keyword>
<keyword id="KW-0963">Cytoplasm</keyword>
<keyword id="KW-0227">DNA damage</keyword>
<keyword id="KW-0233">DNA recombination</keyword>
<keyword id="KW-0234">DNA repair</keyword>
<keyword id="KW-0238">DNA-binding</keyword>
<keyword id="KW-0547">Nucleotide-binding</keyword>
<keyword id="KW-1185">Reference proteome</keyword>
<keyword id="KW-0742">SOS response</keyword>
<dbReference type="EMBL" id="AF037258">
    <property type="protein sequence ID" value="AAC38569.1"/>
    <property type="molecule type" value="Genomic_DNA"/>
</dbReference>
<dbReference type="EMBL" id="AE006470">
    <property type="protein sequence ID" value="AAM73149.1"/>
    <property type="molecule type" value="Genomic_DNA"/>
</dbReference>
<dbReference type="RefSeq" id="NP_662807.1">
    <property type="nucleotide sequence ID" value="NC_002932.3"/>
</dbReference>
<dbReference type="RefSeq" id="WP_010933587.1">
    <property type="nucleotide sequence ID" value="NC_002932.3"/>
</dbReference>
<dbReference type="SMR" id="O52393"/>
<dbReference type="STRING" id="194439.CT1930"/>
<dbReference type="EnsemblBacteria" id="AAM73149">
    <property type="protein sequence ID" value="AAM73149"/>
    <property type="gene ID" value="CT1930"/>
</dbReference>
<dbReference type="KEGG" id="cte:CT1930"/>
<dbReference type="PATRIC" id="fig|194439.7.peg.1749"/>
<dbReference type="eggNOG" id="COG0468">
    <property type="taxonomic scope" value="Bacteria"/>
</dbReference>
<dbReference type="HOGENOM" id="CLU_040469_3_2_10"/>
<dbReference type="OrthoDB" id="9776733at2"/>
<dbReference type="Proteomes" id="UP000001007">
    <property type="component" value="Chromosome"/>
</dbReference>
<dbReference type="GO" id="GO:0005829">
    <property type="term" value="C:cytosol"/>
    <property type="evidence" value="ECO:0007669"/>
    <property type="project" value="TreeGrafter"/>
</dbReference>
<dbReference type="GO" id="GO:0005524">
    <property type="term" value="F:ATP binding"/>
    <property type="evidence" value="ECO:0007669"/>
    <property type="project" value="UniProtKB-UniRule"/>
</dbReference>
<dbReference type="GO" id="GO:0016887">
    <property type="term" value="F:ATP hydrolysis activity"/>
    <property type="evidence" value="ECO:0007669"/>
    <property type="project" value="InterPro"/>
</dbReference>
<dbReference type="GO" id="GO:0140664">
    <property type="term" value="F:ATP-dependent DNA damage sensor activity"/>
    <property type="evidence" value="ECO:0007669"/>
    <property type="project" value="InterPro"/>
</dbReference>
<dbReference type="GO" id="GO:0003684">
    <property type="term" value="F:damaged DNA binding"/>
    <property type="evidence" value="ECO:0007669"/>
    <property type="project" value="UniProtKB-UniRule"/>
</dbReference>
<dbReference type="GO" id="GO:0003697">
    <property type="term" value="F:single-stranded DNA binding"/>
    <property type="evidence" value="ECO:0007669"/>
    <property type="project" value="UniProtKB-UniRule"/>
</dbReference>
<dbReference type="GO" id="GO:0006310">
    <property type="term" value="P:DNA recombination"/>
    <property type="evidence" value="ECO:0007669"/>
    <property type="project" value="UniProtKB-UniRule"/>
</dbReference>
<dbReference type="GO" id="GO:0006281">
    <property type="term" value="P:DNA repair"/>
    <property type="evidence" value="ECO:0007669"/>
    <property type="project" value="UniProtKB-UniRule"/>
</dbReference>
<dbReference type="GO" id="GO:0009432">
    <property type="term" value="P:SOS response"/>
    <property type="evidence" value="ECO:0007669"/>
    <property type="project" value="UniProtKB-UniRule"/>
</dbReference>
<dbReference type="CDD" id="cd00983">
    <property type="entry name" value="RecA"/>
    <property type="match status" value="1"/>
</dbReference>
<dbReference type="FunFam" id="3.40.50.300:FF:000087">
    <property type="entry name" value="Recombinase RecA"/>
    <property type="match status" value="1"/>
</dbReference>
<dbReference type="Gene3D" id="3.40.50.300">
    <property type="entry name" value="P-loop containing nucleotide triphosphate hydrolases"/>
    <property type="match status" value="1"/>
</dbReference>
<dbReference type="HAMAP" id="MF_00268">
    <property type="entry name" value="RecA"/>
    <property type="match status" value="1"/>
</dbReference>
<dbReference type="InterPro" id="IPR003593">
    <property type="entry name" value="AAA+_ATPase"/>
</dbReference>
<dbReference type="InterPro" id="IPR013765">
    <property type="entry name" value="DNA_recomb/repair_RecA"/>
</dbReference>
<dbReference type="InterPro" id="IPR020584">
    <property type="entry name" value="DNA_recomb/repair_RecA_CS"/>
</dbReference>
<dbReference type="InterPro" id="IPR027417">
    <property type="entry name" value="P-loop_NTPase"/>
</dbReference>
<dbReference type="InterPro" id="IPR049261">
    <property type="entry name" value="RecA-like_C"/>
</dbReference>
<dbReference type="InterPro" id="IPR049428">
    <property type="entry name" value="RecA-like_N"/>
</dbReference>
<dbReference type="InterPro" id="IPR020588">
    <property type="entry name" value="RecA_ATP-bd"/>
</dbReference>
<dbReference type="InterPro" id="IPR023400">
    <property type="entry name" value="RecA_C_sf"/>
</dbReference>
<dbReference type="InterPro" id="IPR020587">
    <property type="entry name" value="RecA_monomer-monomer_interface"/>
</dbReference>
<dbReference type="NCBIfam" id="TIGR02012">
    <property type="entry name" value="tigrfam_recA"/>
    <property type="match status" value="1"/>
</dbReference>
<dbReference type="PANTHER" id="PTHR45900:SF1">
    <property type="entry name" value="MITOCHONDRIAL DNA REPAIR PROTEIN RECA HOMOLOG-RELATED"/>
    <property type="match status" value="1"/>
</dbReference>
<dbReference type="PANTHER" id="PTHR45900">
    <property type="entry name" value="RECA"/>
    <property type="match status" value="1"/>
</dbReference>
<dbReference type="Pfam" id="PF00154">
    <property type="entry name" value="RecA"/>
    <property type="match status" value="1"/>
</dbReference>
<dbReference type="Pfam" id="PF21096">
    <property type="entry name" value="RecA_C"/>
    <property type="match status" value="1"/>
</dbReference>
<dbReference type="PRINTS" id="PR00142">
    <property type="entry name" value="RECA"/>
</dbReference>
<dbReference type="SMART" id="SM00382">
    <property type="entry name" value="AAA"/>
    <property type="match status" value="1"/>
</dbReference>
<dbReference type="SUPFAM" id="SSF52540">
    <property type="entry name" value="P-loop containing nucleoside triphosphate hydrolases"/>
    <property type="match status" value="1"/>
</dbReference>
<dbReference type="SUPFAM" id="SSF54752">
    <property type="entry name" value="RecA protein, C-terminal domain"/>
    <property type="match status" value="1"/>
</dbReference>
<dbReference type="PROSITE" id="PS00321">
    <property type="entry name" value="RECA_1"/>
    <property type="match status" value="1"/>
</dbReference>
<dbReference type="PROSITE" id="PS50162">
    <property type="entry name" value="RECA_2"/>
    <property type="match status" value="1"/>
</dbReference>
<dbReference type="PROSITE" id="PS50163">
    <property type="entry name" value="RECA_3"/>
    <property type="match status" value="1"/>
</dbReference>
<name>RECA_CHLTE</name>
<proteinExistence type="inferred from homology"/>
<gene>
    <name evidence="1" type="primary">recA</name>
    <name type="ordered locus">CT1930</name>
</gene>